<keyword id="KW-0066">ATP synthesis</keyword>
<keyword id="KW-1003">Cell membrane</keyword>
<keyword id="KW-0139">CF(1)</keyword>
<keyword id="KW-0375">Hydrogen ion transport</keyword>
<keyword id="KW-0406">Ion transport</keyword>
<keyword id="KW-0472">Membrane</keyword>
<keyword id="KW-1185">Reference proteome</keyword>
<keyword id="KW-0813">Transport</keyword>
<evidence type="ECO:0000255" key="1">
    <source>
        <dbReference type="HAMAP-Rule" id="MF_00815"/>
    </source>
</evidence>
<gene>
    <name evidence="1" type="primary">atpG</name>
    <name type="ordered locus">MPN_599</name>
    <name type="ORF">MP243</name>
</gene>
<dbReference type="EMBL" id="U43738">
    <property type="protein sequence ID" value="AAC43658.1"/>
    <property type="molecule type" value="Genomic_DNA"/>
</dbReference>
<dbReference type="EMBL" id="U00089">
    <property type="protein sequence ID" value="AAB95891.1"/>
    <property type="molecule type" value="Genomic_DNA"/>
</dbReference>
<dbReference type="PIR" id="S62848">
    <property type="entry name" value="S62848"/>
</dbReference>
<dbReference type="RefSeq" id="NP_110288.1">
    <property type="nucleotide sequence ID" value="NC_000912.1"/>
</dbReference>
<dbReference type="RefSeq" id="WP_010874956.1">
    <property type="nucleotide sequence ID" value="NZ_OU342337.1"/>
</dbReference>
<dbReference type="SMR" id="Q50330"/>
<dbReference type="IntAct" id="Q50330">
    <property type="interactions" value="3"/>
</dbReference>
<dbReference type="STRING" id="272634.MPN_599"/>
<dbReference type="EnsemblBacteria" id="AAB95891">
    <property type="protein sequence ID" value="AAB95891"/>
    <property type="gene ID" value="MPN_599"/>
</dbReference>
<dbReference type="GeneID" id="66608716"/>
<dbReference type="KEGG" id="mpn:MPN_599"/>
<dbReference type="PATRIC" id="fig|272634.6.peg.662"/>
<dbReference type="HOGENOM" id="CLU_050669_0_1_14"/>
<dbReference type="OrthoDB" id="9812769at2"/>
<dbReference type="BioCyc" id="MetaCyc:MONOMER-540"/>
<dbReference type="BioCyc" id="MPNE272634:G1GJ3-974-MONOMER"/>
<dbReference type="Proteomes" id="UP000000808">
    <property type="component" value="Chromosome"/>
</dbReference>
<dbReference type="GO" id="GO:0005886">
    <property type="term" value="C:plasma membrane"/>
    <property type="evidence" value="ECO:0007669"/>
    <property type="project" value="UniProtKB-SubCell"/>
</dbReference>
<dbReference type="GO" id="GO:0045259">
    <property type="term" value="C:proton-transporting ATP synthase complex"/>
    <property type="evidence" value="ECO:0007669"/>
    <property type="project" value="UniProtKB-KW"/>
</dbReference>
<dbReference type="GO" id="GO:0005524">
    <property type="term" value="F:ATP binding"/>
    <property type="evidence" value="ECO:0007669"/>
    <property type="project" value="UniProtKB-UniRule"/>
</dbReference>
<dbReference type="GO" id="GO:0046933">
    <property type="term" value="F:proton-transporting ATP synthase activity, rotational mechanism"/>
    <property type="evidence" value="ECO:0007669"/>
    <property type="project" value="UniProtKB-UniRule"/>
</dbReference>
<dbReference type="GO" id="GO:0042777">
    <property type="term" value="P:proton motive force-driven plasma membrane ATP synthesis"/>
    <property type="evidence" value="ECO:0007669"/>
    <property type="project" value="UniProtKB-UniRule"/>
</dbReference>
<dbReference type="CDD" id="cd12151">
    <property type="entry name" value="F1-ATPase_gamma"/>
    <property type="match status" value="1"/>
</dbReference>
<dbReference type="Gene3D" id="3.40.1380.10">
    <property type="match status" value="1"/>
</dbReference>
<dbReference type="Gene3D" id="1.10.287.80">
    <property type="entry name" value="ATP synthase, gamma subunit, helix hairpin domain"/>
    <property type="match status" value="1"/>
</dbReference>
<dbReference type="HAMAP" id="MF_00815">
    <property type="entry name" value="ATP_synth_gamma_bact"/>
    <property type="match status" value="1"/>
</dbReference>
<dbReference type="InterPro" id="IPR035968">
    <property type="entry name" value="ATP_synth_F1_ATPase_gsu"/>
</dbReference>
<dbReference type="InterPro" id="IPR000131">
    <property type="entry name" value="ATP_synth_F1_gsu"/>
</dbReference>
<dbReference type="NCBIfam" id="TIGR01146">
    <property type="entry name" value="ATPsyn_F1gamma"/>
    <property type="match status" value="1"/>
</dbReference>
<dbReference type="PANTHER" id="PTHR11693">
    <property type="entry name" value="ATP SYNTHASE GAMMA CHAIN"/>
    <property type="match status" value="1"/>
</dbReference>
<dbReference type="PANTHER" id="PTHR11693:SF22">
    <property type="entry name" value="ATP SYNTHASE SUBUNIT GAMMA, MITOCHONDRIAL"/>
    <property type="match status" value="1"/>
</dbReference>
<dbReference type="Pfam" id="PF00231">
    <property type="entry name" value="ATP-synt"/>
    <property type="match status" value="1"/>
</dbReference>
<dbReference type="PRINTS" id="PR00126">
    <property type="entry name" value="ATPASEGAMMA"/>
</dbReference>
<dbReference type="SUPFAM" id="SSF52943">
    <property type="entry name" value="ATP synthase (F1-ATPase), gamma subunit"/>
    <property type="match status" value="1"/>
</dbReference>
<sequence>MAFIQEIKRKMTTVQSTIKITNAMKMVSRAKFVRFKKQFKEVNYFFNEFYKAVGQVVLSLKKMPKPLENPKTLWVMMSSSLGLCGQHNTNMNKLLQTKFQPGDKIFFLGRKNQSFWNKGDTDNPTVGYVDIQDRDLSFDYCQQVSDQIMEQFDLHQLDRICIIYTQFKNPLIQHANSFQVFPFDVAMFKAFNPVKMEQKLDFEPDEETIIKLISPQFFDIALYGGLVETKLCESASRQNAMDAAAKNAKDLYEKYSIQFNKLRQNSITQEIIEIIGGIS</sequence>
<name>ATPG_MYCPN</name>
<accession>Q50330</accession>
<feature type="chain" id="PRO_0000073324" description="ATP synthase gamma chain">
    <location>
        <begin position="1"/>
        <end position="279"/>
    </location>
</feature>
<organism>
    <name type="scientific">Mycoplasma pneumoniae (strain ATCC 29342 / M129 / Subtype 1)</name>
    <name type="common">Mycoplasmoides pneumoniae</name>
    <dbReference type="NCBI Taxonomy" id="272634"/>
    <lineage>
        <taxon>Bacteria</taxon>
        <taxon>Bacillati</taxon>
        <taxon>Mycoplasmatota</taxon>
        <taxon>Mycoplasmoidales</taxon>
        <taxon>Mycoplasmoidaceae</taxon>
        <taxon>Mycoplasmoides</taxon>
    </lineage>
</organism>
<reference key="1">
    <citation type="journal article" date="1996" name="Nucleic Acids Res.">
        <title>Sequence analysis of 56 kb from the genome of the bacterium Mycoplasma pneumoniae comprising the dnaA region, the atp operon and a cluster of ribosomal protein genes.</title>
        <authorList>
            <person name="Hilbert H."/>
            <person name="Himmelreich R."/>
            <person name="Plagens H."/>
            <person name="Herrmann R."/>
        </authorList>
    </citation>
    <scope>NUCLEOTIDE SEQUENCE [GENOMIC DNA]</scope>
    <source>
        <strain>ATCC 29342 / M129 / Subtype 1</strain>
    </source>
</reference>
<reference key="2">
    <citation type="journal article" date="1996" name="Nucleic Acids Res.">
        <title>Complete sequence analysis of the genome of the bacterium Mycoplasma pneumoniae.</title>
        <authorList>
            <person name="Himmelreich R."/>
            <person name="Hilbert H."/>
            <person name="Plagens H."/>
            <person name="Pirkl E."/>
            <person name="Li B.-C."/>
            <person name="Herrmann R."/>
        </authorList>
    </citation>
    <scope>NUCLEOTIDE SEQUENCE [LARGE SCALE GENOMIC DNA]</scope>
    <source>
        <strain>ATCC 29342 / M129 / Subtype 1</strain>
    </source>
</reference>
<protein>
    <recommendedName>
        <fullName evidence="1">ATP synthase gamma chain</fullName>
    </recommendedName>
    <alternativeName>
        <fullName evidence="1">ATP synthase F1 sector gamma subunit</fullName>
    </alternativeName>
    <alternativeName>
        <fullName evidence="1">F-ATPase gamma subunit</fullName>
    </alternativeName>
</protein>
<comment type="function">
    <text evidence="1">Produces ATP from ADP in the presence of a proton gradient across the membrane. The gamma chain is believed to be important in regulating ATPase activity and the flow of protons through the CF(0) complex.</text>
</comment>
<comment type="subunit">
    <text evidence="1">F-type ATPases have 2 components, CF(1) - the catalytic core - and CF(0) - the membrane proton channel. CF(1) has five subunits: alpha(3), beta(3), gamma(1), delta(1), epsilon(1). CF(0) has three main subunits: a, b and c.</text>
</comment>
<comment type="subcellular location">
    <subcellularLocation>
        <location evidence="1">Cell membrane</location>
        <topology evidence="1">Peripheral membrane protein</topology>
    </subcellularLocation>
</comment>
<comment type="similarity">
    <text evidence="1">Belongs to the ATPase gamma chain family.</text>
</comment>
<proteinExistence type="inferred from homology"/>